<gene>
    <name evidence="1" type="primary">ydiU</name>
    <name evidence="1" type="synonym">selO</name>
    <name type="ordered locus">Mpop_5402</name>
</gene>
<name>SELO_METPB</name>
<accession>B1ZBT6</accession>
<feature type="chain" id="PRO_1000132115" description="Protein nucleotidyltransferase YdiU">
    <location>
        <begin position="1"/>
        <end position="498"/>
    </location>
</feature>
<feature type="active site" description="Proton acceptor" evidence="1">
    <location>
        <position position="250"/>
    </location>
</feature>
<feature type="binding site" evidence="1">
    <location>
        <position position="88"/>
    </location>
    <ligand>
        <name>ATP</name>
        <dbReference type="ChEBI" id="CHEBI:30616"/>
    </ligand>
</feature>
<feature type="binding site" evidence="1">
    <location>
        <position position="90"/>
    </location>
    <ligand>
        <name>ATP</name>
        <dbReference type="ChEBI" id="CHEBI:30616"/>
    </ligand>
</feature>
<feature type="binding site" evidence="1">
    <location>
        <position position="91"/>
    </location>
    <ligand>
        <name>ATP</name>
        <dbReference type="ChEBI" id="CHEBI:30616"/>
    </ligand>
</feature>
<feature type="binding site" evidence="1">
    <location>
        <position position="111"/>
    </location>
    <ligand>
        <name>ATP</name>
        <dbReference type="ChEBI" id="CHEBI:30616"/>
    </ligand>
</feature>
<feature type="binding site" evidence="1">
    <location>
        <position position="123"/>
    </location>
    <ligand>
        <name>ATP</name>
        <dbReference type="ChEBI" id="CHEBI:30616"/>
    </ligand>
</feature>
<feature type="binding site" evidence="1">
    <location>
        <position position="124"/>
    </location>
    <ligand>
        <name>ATP</name>
        <dbReference type="ChEBI" id="CHEBI:30616"/>
    </ligand>
</feature>
<feature type="binding site" evidence="1">
    <location>
        <position position="174"/>
    </location>
    <ligand>
        <name>ATP</name>
        <dbReference type="ChEBI" id="CHEBI:30616"/>
    </ligand>
</feature>
<feature type="binding site" evidence="1">
    <location>
        <position position="181"/>
    </location>
    <ligand>
        <name>ATP</name>
        <dbReference type="ChEBI" id="CHEBI:30616"/>
    </ligand>
</feature>
<feature type="binding site" evidence="1">
    <location>
        <position position="251"/>
    </location>
    <ligand>
        <name>Mg(2+)</name>
        <dbReference type="ChEBI" id="CHEBI:18420"/>
    </ligand>
</feature>
<feature type="binding site" evidence="1">
    <location>
        <position position="260"/>
    </location>
    <ligand>
        <name>ATP</name>
        <dbReference type="ChEBI" id="CHEBI:30616"/>
    </ligand>
</feature>
<feature type="binding site" evidence="1">
    <location>
        <position position="260"/>
    </location>
    <ligand>
        <name>Mg(2+)</name>
        <dbReference type="ChEBI" id="CHEBI:18420"/>
    </ligand>
</feature>
<keyword id="KW-0067">ATP-binding</keyword>
<keyword id="KW-0460">Magnesium</keyword>
<keyword id="KW-0464">Manganese</keyword>
<keyword id="KW-0479">Metal-binding</keyword>
<keyword id="KW-0547">Nucleotide-binding</keyword>
<keyword id="KW-0548">Nucleotidyltransferase</keyword>
<keyword id="KW-0808">Transferase</keyword>
<evidence type="ECO:0000255" key="1">
    <source>
        <dbReference type="HAMAP-Rule" id="MF_00692"/>
    </source>
</evidence>
<reference key="1">
    <citation type="submission" date="2008-04" db="EMBL/GenBank/DDBJ databases">
        <title>Complete sequence of chromosome of Methylobacterium populi BJ001.</title>
        <authorList>
            <consortium name="US DOE Joint Genome Institute"/>
            <person name="Copeland A."/>
            <person name="Lucas S."/>
            <person name="Lapidus A."/>
            <person name="Glavina del Rio T."/>
            <person name="Dalin E."/>
            <person name="Tice H."/>
            <person name="Bruce D."/>
            <person name="Goodwin L."/>
            <person name="Pitluck S."/>
            <person name="Chertkov O."/>
            <person name="Brettin T."/>
            <person name="Detter J.C."/>
            <person name="Han C."/>
            <person name="Kuske C.R."/>
            <person name="Schmutz J."/>
            <person name="Larimer F."/>
            <person name="Land M."/>
            <person name="Hauser L."/>
            <person name="Kyrpides N."/>
            <person name="Mikhailova N."/>
            <person name="Marx C."/>
            <person name="Richardson P."/>
        </authorList>
    </citation>
    <scope>NUCLEOTIDE SEQUENCE [LARGE SCALE GENOMIC DNA]</scope>
    <source>
        <strain>ATCC BAA-705 / NCIMB 13946 / BJ001</strain>
    </source>
</reference>
<sequence>MTALFPFDNSFARLPDRFFARVAPTAVEAPRLVRLNRTLALDLGLDPDRLESPEGLDVLSGRRVAEGAEPLAAAYAGHQFGQFVPQLGDGRAILLGEVVGRDGRRRDIQLKGSGPTPFSRRGDGRAALGPVLREYLVSEAMHALGIPTTRALAAVTTGEPVIRETVLPGAVLTRVASSHIRVGSFQFFAARGDVEGLRALADHAIARHDPEAAEAENPYRALLEGVIRRQAELVARWLGIGFIHGVMNTDNMSIAGETIDYGPCAFLDAYDPATAFSSIDRHGRYAYGNQPRIALWNLTRLAEALLPLLSEDETKAVAEAEAALTGFAGLFEAAYHGLLNRKLGLTTMRDGDPALAGDLLKTMAENGADFTLTFRRLSAAAPGSGPAPEPEAVEAVRSLFIDPTSFDAWAERWRRRLDEEPGSAAGRKALMRSVNPAFIPRNHRVEAMIEAAVERQDFVPFETLLTVLSRPYDDQPDFAQFAEAPEGGGRGYRTFCGT</sequence>
<dbReference type="EC" id="2.7.7.-" evidence="1"/>
<dbReference type="EC" id="2.7.7.108" evidence="1"/>
<dbReference type="EMBL" id="CP001029">
    <property type="protein sequence ID" value="ACB83494.1"/>
    <property type="molecule type" value="Genomic_DNA"/>
</dbReference>
<dbReference type="RefSeq" id="WP_012457090.1">
    <property type="nucleotide sequence ID" value="NC_010725.1"/>
</dbReference>
<dbReference type="SMR" id="B1ZBT6"/>
<dbReference type="STRING" id="441620.Mpop_5402"/>
<dbReference type="KEGG" id="mpo:Mpop_5402"/>
<dbReference type="eggNOG" id="COG0397">
    <property type="taxonomic scope" value="Bacteria"/>
</dbReference>
<dbReference type="HOGENOM" id="CLU_010245_4_1_5"/>
<dbReference type="OrthoDB" id="9776281at2"/>
<dbReference type="Proteomes" id="UP000007136">
    <property type="component" value="Chromosome"/>
</dbReference>
<dbReference type="GO" id="GO:0070733">
    <property type="term" value="F:AMPylase activity"/>
    <property type="evidence" value="ECO:0007669"/>
    <property type="project" value="RHEA"/>
</dbReference>
<dbReference type="GO" id="GO:0005524">
    <property type="term" value="F:ATP binding"/>
    <property type="evidence" value="ECO:0007669"/>
    <property type="project" value="UniProtKB-UniRule"/>
</dbReference>
<dbReference type="GO" id="GO:0000287">
    <property type="term" value="F:magnesium ion binding"/>
    <property type="evidence" value="ECO:0007669"/>
    <property type="project" value="UniProtKB-UniRule"/>
</dbReference>
<dbReference type="HAMAP" id="MF_00692">
    <property type="entry name" value="YdiU_SelO"/>
    <property type="match status" value="1"/>
</dbReference>
<dbReference type="InterPro" id="IPR011009">
    <property type="entry name" value="Kinase-like_dom_sf"/>
</dbReference>
<dbReference type="InterPro" id="IPR003846">
    <property type="entry name" value="SelO"/>
</dbReference>
<dbReference type="NCBIfam" id="NF000658">
    <property type="entry name" value="PRK00029.1"/>
    <property type="match status" value="1"/>
</dbReference>
<dbReference type="PANTHER" id="PTHR32057">
    <property type="entry name" value="PROTEIN ADENYLYLTRANSFERASE SELO, MITOCHONDRIAL"/>
    <property type="match status" value="1"/>
</dbReference>
<dbReference type="PANTHER" id="PTHR32057:SF14">
    <property type="entry name" value="PROTEIN ADENYLYLTRANSFERASE SELO, MITOCHONDRIAL"/>
    <property type="match status" value="1"/>
</dbReference>
<dbReference type="Pfam" id="PF02696">
    <property type="entry name" value="SelO"/>
    <property type="match status" value="1"/>
</dbReference>
<dbReference type="SUPFAM" id="SSF56112">
    <property type="entry name" value="Protein kinase-like (PK-like)"/>
    <property type="match status" value="1"/>
</dbReference>
<proteinExistence type="inferred from homology"/>
<protein>
    <recommendedName>
        <fullName evidence="1">Protein nucleotidyltransferase YdiU</fullName>
        <ecNumber evidence="1">2.7.7.-</ecNumber>
    </recommendedName>
    <alternativeName>
        <fullName evidence="1">Protein adenylyltransferase YdiU</fullName>
        <ecNumber evidence="1">2.7.7.108</ecNumber>
    </alternativeName>
    <alternativeName>
        <fullName evidence="1">Protein uridylyltransferase YdiU</fullName>
        <ecNumber evidence="1">2.7.7.-</ecNumber>
    </alternativeName>
</protein>
<organism>
    <name type="scientific">Methylorubrum populi (strain ATCC BAA-705 / NCIMB 13946 / BJ001)</name>
    <name type="common">Methylobacterium populi</name>
    <dbReference type="NCBI Taxonomy" id="441620"/>
    <lineage>
        <taxon>Bacteria</taxon>
        <taxon>Pseudomonadati</taxon>
        <taxon>Pseudomonadota</taxon>
        <taxon>Alphaproteobacteria</taxon>
        <taxon>Hyphomicrobiales</taxon>
        <taxon>Methylobacteriaceae</taxon>
        <taxon>Methylorubrum</taxon>
    </lineage>
</organism>
<comment type="function">
    <text evidence="1">Nucleotidyltransferase involved in the post-translational modification of proteins. It can catalyze the addition of adenosine monophosphate (AMP) or uridine monophosphate (UMP) to a protein, resulting in modifications known as AMPylation and UMPylation.</text>
</comment>
<comment type="catalytic activity">
    <reaction evidence="1">
        <text>L-seryl-[protein] + ATP = 3-O-(5'-adenylyl)-L-seryl-[protein] + diphosphate</text>
        <dbReference type="Rhea" id="RHEA:58120"/>
        <dbReference type="Rhea" id="RHEA-COMP:9863"/>
        <dbReference type="Rhea" id="RHEA-COMP:15073"/>
        <dbReference type="ChEBI" id="CHEBI:29999"/>
        <dbReference type="ChEBI" id="CHEBI:30616"/>
        <dbReference type="ChEBI" id="CHEBI:33019"/>
        <dbReference type="ChEBI" id="CHEBI:142516"/>
        <dbReference type="EC" id="2.7.7.108"/>
    </reaction>
</comment>
<comment type="catalytic activity">
    <reaction evidence="1">
        <text>L-threonyl-[protein] + ATP = 3-O-(5'-adenylyl)-L-threonyl-[protein] + diphosphate</text>
        <dbReference type="Rhea" id="RHEA:54292"/>
        <dbReference type="Rhea" id="RHEA-COMP:11060"/>
        <dbReference type="Rhea" id="RHEA-COMP:13847"/>
        <dbReference type="ChEBI" id="CHEBI:30013"/>
        <dbReference type="ChEBI" id="CHEBI:30616"/>
        <dbReference type="ChEBI" id="CHEBI:33019"/>
        <dbReference type="ChEBI" id="CHEBI:138113"/>
        <dbReference type="EC" id="2.7.7.108"/>
    </reaction>
</comment>
<comment type="catalytic activity">
    <reaction evidence="1">
        <text>L-tyrosyl-[protein] + ATP = O-(5'-adenylyl)-L-tyrosyl-[protein] + diphosphate</text>
        <dbReference type="Rhea" id="RHEA:54288"/>
        <dbReference type="Rhea" id="RHEA-COMP:10136"/>
        <dbReference type="Rhea" id="RHEA-COMP:13846"/>
        <dbReference type="ChEBI" id="CHEBI:30616"/>
        <dbReference type="ChEBI" id="CHEBI:33019"/>
        <dbReference type="ChEBI" id="CHEBI:46858"/>
        <dbReference type="ChEBI" id="CHEBI:83624"/>
        <dbReference type="EC" id="2.7.7.108"/>
    </reaction>
</comment>
<comment type="catalytic activity">
    <reaction evidence="1">
        <text>L-histidyl-[protein] + UTP = N(tele)-(5'-uridylyl)-L-histidyl-[protein] + diphosphate</text>
        <dbReference type="Rhea" id="RHEA:83891"/>
        <dbReference type="Rhea" id="RHEA-COMP:9745"/>
        <dbReference type="Rhea" id="RHEA-COMP:20239"/>
        <dbReference type="ChEBI" id="CHEBI:29979"/>
        <dbReference type="ChEBI" id="CHEBI:33019"/>
        <dbReference type="ChEBI" id="CHEBI:46398"/>
        <dbReference type="ChEBI" id="CHEBI:233474"/>
    </reaction>
</comment>
<comment type="catalytic activity">
    <reaction evidence="1">
        <text>L-seryl-[protein] + UTP = O-(5'-uridylyl)-L-seryl-[protein] + diphosphate</text>
        <dbReference type="Rhea" id="RHEA:64604"/>
        <dbReference type="Rhea" id="RHEA-COMP:9863"/>
        <dbReference type="Rhea" id="RHEA-COMP:16635"/>
        <dbReference type="ChEBI" id="CHEBI:29999"/>
        <dbReference type="ChEBI" id="CHEBI:33019"/>
        <dbReference type="ChEBI" id="CHEBI:46398"/>
        <dbReference type="ChEBI" id="CHEBI:156051"/>
    </reaction>
</comment>
<comment type="catalytic activity">
    <reaction evidence="1">
        <text>L-tyrosyl-[protein] + UTP = O-(5'-uridylyl)-L-tyrosyl-[protein] + diphosphate</text>
        <dbReference type="Rhea" id="RHEA:83887"/>
        <dbReference type="Rhea" id="RHEA-COMP:10136"/>
        <dbReference type="Rhea" id="RHEA-COMP:20238"/>
        <dbReference type="ChEBI" id="CHEBI:33019"/>
        <dbReference type="ChEBI" id="CHEBI:46398"/>
        <dbReference type="ChEBI" id="CHEBI:46858"/>
        <dbReference type="ChEBI" id="CHEBI:90602"/>
    </reaction>
</comment>
<comment type="cofactor">
    <cofactor evidence="1">
        <name>Mg(2+)</name>
        <dbReference type="ChEBI" id="CHEBI:18420"/>
    </cofactor>
    <cofactor evidence="1">
        <name>Mn(2+)</name>
        <dbReference type="ChEBI" id="CHEBI:29035"/>
    </cofactor>
</comment>
<comment type="similarity">
    <text evidence="1">Belongs to the SELO family.</text>
</comment>